<keyword id="KW-0408">Iron</keyword>
<keyword id="KW-0479">Metal-binding</keyword>
<keyword id="KW-1185">Reference proteome</keyword>
<organism>
    <name type="scientific">Buchnera aphidicola subsp. Acyrthosiphon pisum (strain APS)</name>
    <name type="common">Acyrthosiphon pisum symbiotic bacterium</name>
    <dbReference type="NCBI Taxonomy" id="107806"/>
    <lineage>
        <taxon>Bacteria</taxon>
        <taxon>Pseudomonadati</taxon>
        <taxon>Pseudomonadota</taxon>
        <taxon>Gammaproteobacteria</taxon>
        <taxon>Enterobacterales</taxon>
        <taxon>Erwiniaceae</taxon>
        <taxon>Buchnera</taxon>
    </lineage>
</organism>
<comment type="function">
    <text evidence="1">Involved in iron-sulfur (Fe-S) cluster assembly. May act as a regulator of Fe-S biogenesis.</text>
</comment>
<comment type="similarity">
    <text evidence="1 2">Belongs to the frataxin family.</text>
</comment>
<feature type="chain" id="PRO_0000193930" description="Iron-sulfur cluster assembly protein CyaY">
    <location>
        <begin position="1"/>
        <end position="116"/>
    </location>
</feature>
<sequence>MKKKLNTKKENNNFYILVNDLFLKIEDNLNLYENEIDIDYEIQDYVMTITFSNKTLIIINKQEPLQQIWLATMQNGYHFDYKNNQWICNRSNKNFWEIFENACSIQSNKDLIFCKK</sequence>
<proteinExistence type="inferred from homology"/>
<evidence type="ECO:0000255" key="1">
    <source>
        <dbReference type="HAMAP-Rule" id="MF_00142"/>
    </source>
</evidence>
<evidence type="ECO:0000305" key="2"/>
<dbReference type="EMBL" id="BA000003">
    <property type="protein sequence ID" value="BAB13279.1"/>
    <property type="molecule type" value="Genomic_DNA"/>
</dbReference>
<dbReference type="RefSeq" id="NP_240393.1">
    <property type="nucleotide sequence ID" value="NC_002528.1"/>
</dbReference>
<dbReference type="RefSeq" id="WP_010896181.1">
    <property type="nucleotide sequence ID" value="NZ_AP036055.1"/>
</dbReference>
<dbReference type="SMR" id="P57650"/>
<dbReference type="STRING" id="563178.BUAP5A_583"/>
<dbReference type="EnsemblBacteria" id="BAB13279">
    <property type="protein sequence ID" value="BAB13279"/>
    <property type="gene ID" value="BAB13279"/>
</dbReference>
<dbReference type="KEGG" id="buc:BU590"/>
<dbReference type="PATRIC" id="fig|107806.10.peg.595"/>
<dbReference type="eggNOG" id="COG1965">
    <property type="taxonomic scope" value="Bacteria"/>
</dbReference>
<dbReference type="HOGENOM" id="CLU_080880_3_0_6"/>
<dbReference type="Proteomes" id="UP000001806">
    <property type="component" value="Chromosome"/>
</dbReference>
<dbReference type="GO" id="GO:0005829">
    <property type="term" value="C:cytosol"/>
    <property type="evidence" value="ECO:0007669"/>
    <property type="project" value="TreeGrafter"/>
</dbReference>
<dbReference type="GO" id="GO:0008199">
    <property type="term" value="F:ferric iron binding"/>
    <property type="evidence" value="ECO:0007669"/>
    <property type="project" value="InterPro"/>
</dbReference>
<dbReference type="GO" id="GO:0008198">
    <property type="term" value="F:ferrous iron binding"/>
    <property type="evidence" value="ECO:0007669"/>
    <property type="project" value="TreeGrafter"/>
</dbReference>
<dbReference type="GO" id="GO:0016226">
    <property type="term" value="P:iron-sulfur cluster assembly"/>
    <property type="evidence" value="ECO:0007669"/>
    <property type="project" value="UniProtKB-UniRule"/>
</dbReference>
<dbReference type="CDD" id="cd00503">
    <property type="entry name" value="Frataxin"/>
    <property type="match status" value="1"/>
</dbReference>
<dbReference type="Gene3D" id="3.30.920.10">
    <property type="entry name" value="Frataxin/CyaY"/>
    <property type="match status" value="1"/>
</dbReference>
<dbReference type="HAMAP" id="MF_00142">
    <property type="entry name" value="CyaY"/>
    <property type="match status" value="1"/>
</dbReference>
<dbReference type="InterPro" id="IPR047584">
    <property type="entry name" value="CyaY"/>
</dbReference>
<dbReference type="InterPro" id="IPR002908">
    <property type="entry name" value="Frataxin/CyaY"/>
</dbReference>
<dbReference type="InterPro" id="IPR036524">
    <property type="entry name" value="Frataxin/CyaY_sf"/>
</dbReference>
<dbReference type="InterPro" id="IPR020895">
    <property type="entry name" value="Frataxin_CS"/>
</dbReference>
<dbReference type="NCBIfam" id="TIGR03421">
    <property type="entry name" value="FeS_CyaY"/>
    <property type="match status" value="1"/>
</dbReference>
<dbReference type="PANTHER" id="PTHR16821">
    <property type="entry name" value="FRATAXIN"/>
    <property type="match status" value="1"/>
</dbReference>
<dbReference type="PANTHER" id="PTHR16821:SF2">
    <property type="entry name" value="FRATAXIN, MITOCHONDRIAL"/>
    <property type="match status" value="1"/>
</dbReference>
<dbReference type="Pfam" id="PF01491">
    <property type="entry name" value="Frataxin_Cyay"/>
    <property type="match status" value="1"/>
</dbReference>
<dbReference type="SMART" id="SM01219">
    <property type="entry name" value="Frataxin_Cyay"/>
    <property type="match status" value="1"/>
</dbReference>
<dbReference type="SUPFAM" id="SSF55387">
    <property type="entry name" value="Frataxin/Nqo15-like"/>
    <property type="match status" value="1"/>
</dbReference>
<dbReference type="PROSITE" id="PS01344">
    <property type="entry name" value="FRATAXIN_1"/>
    <property type="match status" value="1"/>
</dbReference>
<dbReference type="PROSITE" id="PS50810">
    <property type="entry name" value="FRATAXIN_2"/>
    <property type="match status" value="1"/>
</dbReference>
<accession>P57650</accession>
<gene>
    <name evidence="1" type="primary">cyaY</name>
    <name type="ordered locus">BU590</name>
</gene>
<reference key="1">
    <citation type="journal article" date="2000" name="Nature">
        <title>Genome sequence of the endocellular bacterial symbiont of aphids Buchnera sp. APS.</title>
        <authorList>
            <person name="Shigenobu S."/>
            <person name="Watanabe H."/>
            <person name="Hattori M."/>
            <person name="Sakaki Y."/>
            <person name="Ishikawa H."/>
        </authorList>
    </citation>
    <scope>NUCLEOTIDE SEQUENCE [LARGE SCALE GENOMIC DNA]</scope>
    <source>
        <strain>APS</strain>
    </source>
</reference>
<name>CYAY_BUCAI</name>
<protein>
    <recommendedName>
        <fullName evidence="1">Iron-sulfur cluster assembly protein CyaY</fullName>
    </recommendedName>
</protein>